<comment type="subcellular location">
    <subcellularLocation>
        <location evidence="5">Membrane</location>
        <topology evidence="5">Single-pass membrane protein</topology>
    </subcellularLocation>
</comment>
<proteinExistence type="evidence at protein level"/>
<protein>
    <recommendedName>
        <fullName>Uncharacterized protein C3D6.13c</fullName>
    </recommendedName>
</protein>
<name>YB1D_SCHPO</name>
<accession>P87178</accession>
<feature type="chain" id="PRO_0000116494" description="Uncharacterized protein C3D6.13c">
    <location>
        <begin position="1"/>
        <end position="726"/>
    </location>
</feature>
<feature type="transmembrane region" description="Helical" evidence="1">
    <location>
        <begin position="675"/>
        <end position="695"/>
    </location>
</feature>
<feature type="domain" description="Thioredoxin" evidence="2">
    <location>
        <begin position="10"/>
        <end position="135"/>
    </location>
</feature>
<feature type="region of interest" description="Disordered" evidence="3">
    <location>
        <begin position="133"/>
        <end position="153"/>
    </location>
</feature>
<feature type="region of interest" description="Disordered" evidence="3">
    <location>
        <begin position="227"/>
        <end position="280"/>
    </location>
</feature>
<feature type="compositionally biased region" description="Acidic residues" evidence="3">
    <location>
        <begin position="138"/>
        <end position="153"/>
    </location>
</feature>
<feature type="modified residue" description="Phosphoserine" evidence="4">
    <location>
        <position position="708"/>
    </location>
</feature>
<evidence type="ECO:0000255" key="1"/>
<evidence type="ECO:0000255" key="2">
    <source>
        <dbReference type="PROSITE-ProRule" id="PRU00691"/>
    </source>
</evidence>
<evidence type="ECO:0000256" key="3">
    <source>
        <dbReference type="SAM" id="MobiDB-lite"/>
    </source>
</evidence>
<evidence type="ECO:0000269" key="4">
    <source>
    </source>
</evidence>
<evidence type="ECO:0000305" key="5"/>
<reference key="1">
    <citation type="journal article" date="2002" name="Nature">
        <title>The genome sequence of Schizosaccharomyces pombe.</title>
        <authorList>
            <person name="Wood V."/>
            <person name="Gwilliam R."/>
            <person name="Rajandream M.A."/>
            <person name="Lyne M.H."/>
            <person name="Lyne R."/>
            <person name="Stewart A."/>
            <person name="Sgouros J.G."/>
            <person name="Peat N."/>
            <person name="Hayles J."/>
            <person name="Baker S.G."/>
            <person name="Basham D."/>
            <person name="Bowman S."/>
            <person name="Brooks K."/>
            <person name="Brown D."/>
            <person name="Brown S."/>
            <person name="Chillingworth T."/>
            <person name="Churcher C.M."/>
            <person name="Collins M."/>
            <person name="Connor R."/>
            <person name="Cronin A."/>
            <person name="Davis P."/>
            <person name="Feltwell T."/>
            <person name="Fraser A."/>
            <person name="Gentles S."/>
            <person name="Goble A."/>
            <person name="Hamlin N."/>
            <person name="Harris D.E."/>
            <person name="Hidalgo J."/>
            <person name="Hodgson G."/>
            <person name="Holroyd S."/>
            <person name="Hornsby T."/>
            <person name="Howarth S."/>
            <person name="Huckle E.J."/>
            <person name="Hunt S."/>
            <person name="Jagels K."/>
            <person name="James K.D."/>
            <person name="Jones L."/>
            <person name="Jones M."/>
            <person name="Leather S."/>
            <person name="McDonald S."/>
            <person name="McLean J."/>
            <person name="Mooney P."/>
            <person name="Moule S."/>
            <person name="Mungall K.L."/>
            <person name="Murphy L.D."/>
            <person name="Niblett D."/>
            <person name="Odell C."/>
            <person name="Oliver K."/>
            <person name="O'Neil S."/>
            <person name="Pearson D."/>
            <person name="Quail M.A."/>
            <person name="Rabbinowitsch E."/>
            <person name="Rutherford K.M."/>
            <person name="Rutter S."/>
            <person name="Saunders D."/>
            <person name="Seeger K."/>
            <person name="Sharp S."/>
            <person name="Skelton J."/>
            <person name="Simmonds M.N."/>
            <person name="Squares R."/>
            <person name="Squares S."/>
            <person name="Stevens K."/>
            <person name="Taylor K."/>
            <person name="Taylor R.G."/>
            <person name="Tivey A."/>
            <person name="Walsh S.V."/>
            <person name="Warren T."/>
            <person name="Whitehead S."/>
            <person name="Woodward J.R."/>
            <person name="Volckaert G."/>
            <person name="Aert R."/>
            <person name="Robben J."/>
            <person name="Grymonprez B."/>
            <person name="Weltjens I."/>
            <person name="Vanstreels E."/>
            <person name="Rieger M."/>
            <person name="Schaefer M."/>
            <person name="Mueller-Auer S."/>
            <person name="Gabel C."/>
            <person name="Fuchs M."/>
            <person name="Duesterhoeft A."/>
            <person name="Fritzc C."/>
            <person name="Holzer E."/>
            <person name="Moestl D."/>
            <person name="Hilbert H."/>
            <person name="Borzym K."/>
            <person name="Langer I."/>
            <person name="Beck A."/>
            <person name="Lehrach H."/>
            <person name="Reinhardt R."/>
            <person name="Pohl T.M."/>
            <person name="Eger P."/>
            <person name="Zimmermann W."/>
            <person name="Wedler H."/>
            <person name="Wambutt R."/>
            <person name="Purnelle B."/>
            <person name="Goffeau A."/>
            <person name="Cadieu E."/>
            <person name="Dreano S."/>
            <person name="Gloux S."/>
            <person name="Lelaure V."/>
            <person name="Mottier S."/>
            <person name="Galibert F."/>
            <person name="Aves S.J."/>
            <person name="Xiang Z."/>
            <person name="Hunt C."/>
            <person name="Moore K."/>
            <person name="Hurst S.M."/>
            <person name="Lucas M."/>
            <person name="Rochet M."/>
            <person name="Gaillardin C."/>
            <person name="Tallada V.A."/>
            <person name="Garzon A."/>
            <person name="Thode G."/>
            <person name="Daga R.R."/>
            <person name="Cruzado L."/>
            <person name="Jimenez J."/>
            <person name="Sanchez M."/>
            <person name="del Rey F."/>
            <person name="Benito J."/>
            <person name="Dominguez A."/>
            <person name="Revuelta J.L."/>
            <person name="Moreno S."/>
            <person name="Armstrong J."/>
            <person name="Forsburg S.L."/>
            <person name="Cerutti L."/>
            <person name="Lowe T."/>
            <person name="McCombie W.R."/>
            <person name="Paulsen I."/>
            <person name="Potashkin J."/>
            <person name="Shpakovski G.V."/>
            <person name="Ussery D."/>
            <person name="Barrell B.G."/>
            <person name="Nurse P."/>
        </authorList>
    </citation>
    <scope>NUCLEOTIDE SEQUENCE [LARGE SCALE GENOMIC DNA]</scope>
    <source>
        <strain>972 / ATCC 24843</strain>
    </source>
</reference>
<reference key="2">
    <citation type="journal article" date="2008" name="J. Proteome Res.">
        <title>Phosphoproteome analysis of fission yeast.</title>
        <authorList>
            <person name="Wilson-Grady J.T."/>
            <person name="Villen J."/>
            <person name="Gygi S.P."/>
        </authorList>
    </citation>
    <scope>PHOSPHORYLATION [LARGE SCALE ANALYSIS] AT SER-708</scope>
    <scope>IDENTIFICATION BY MASS SPECTROMETRY</scope>
</reference>
<sequence length="726" mass="81237">MRSNTFGSVMRISWVVAFITMVQTLVSGVPLTDNDLESEVSKGTWFIKYYLPSCGACKRLGPMWDNMVEKAKEQVEGSNFHFGEVDCSKELSSCANIRAVPTLYLYQNGEIVEEVPFGASTSEASLLDFVETHLNPDTDPDIPSDEDVLTDEDTEEVASIQPALSTSVSSLSLASTAMSKSASASEFSGSSVTKASKKLTSSPTSVASKKATLSSVSKVASTSSLPVTSVSASVDPKSAASKVQDAEFSIQTAPSFPKEKEEKENTEETEESKKSINPTGTSKALALDADIDAALTDKEGWFIQFYSSECDDCDDVSTAWYAMANRMRGKLNVAHINCAVSKRACKQYSIQYFPTFLFFKEEAFVEYVGLPNEGDLVSFAEEAANFEIREVELLDTVNAEKNGDVFFLYFYDDDSAEYLNIIRKTGIQLLGHANLYLTTSQQIAKKYRVVSFPKLIVVRDGIASYYPAKMAQDNKDYRRILGWMKNNWLPVLPELRTSNSKEIFNDESVVLFLLNPELDDFDETKRTAQKIATEFLDEEGRTYQSNWQKETDKKNSLVNEAEEKNDLEAIEAAKNFHVNGKPSPTRFAWVNGKFWAQWLRKFDIDIEATGPRVIVYNAAQDIYWDETAKGTPISIEKDTVFDIIKQVETDPDHLKFKILKKNLGVEYLESYGLNIRVLYMVLGIVTVGILVWYFSGRRARTLQRRRHSTPILPVSMRSTGNSGKFD</sequence>
<gene>
    <name type="ORF">SPBC3D6.13c</name>
</gene>
<dbReference type="EMBL" id="CU329671">
    <property type="protein sequence ID" value="CAB09115.1"/>
    <property type="molecule type" value="Genomic_DNA"/>
</dbReference>
<dbReference type="PIR" id="T40373">
    <property type="entry name" value="T40373"/>
</dbReference>
<dbReference type="SMR" id="P87178"/>
<dbReference type="BioGRID" id="277556">
    <property type="interactions" value="7"/>
</dbReference>
<dbReference type="FunCoup" id="P87178">
    <property type="interactions" value="316"/>
</dbReference>
<dbReference type="STRING" id="284812.P87178"/>
<dbReference type="iPTMnet" id="P87178"/>
<dbReference type="PaxDb" id="4896-SPBC3D6.13c.1"/>
<dbReference type="EnsemblFungi" id="SPBC3D6.13c.1">
    <property type="protein sequence ID" value="SPBC3D6.13c.1:pep"/>
    <property type="gene ID" value="SPBC3D6.13c"/>
</dbReference>
<dbReference type="KEGG" id="spo:2541041"/>
<dbReference type="PomBase" id="SPBC3D6.13c"/>
<dbReference type="VEuPathDB" id="FungiDB:SPBC3D6.13c"/>
<dbReference type="eggNOG" id="KOG0191">
    <property type="taxonomic scope" value="Eukaryota"/>
</dbReference>
<dbReference type="HOGENOM" id="CLU_021868_0_0_1"/>
<dbReference type="InParanoid" id="P87178"/>
<dbReference type="OMA" id="IFVYFYD"/>
<dbReference type="PhylomeDB" id="P87178"/>
<dbReference type="Reactome" id="R-SPO-114608">
    <property type="pathway name" value="Platelet degranulation"/>
</dbReference>
<dbReference type="PRO" id="PR:P87178"/>
<dbReference type="Proteomes" id="UP000002485">
    <property type="component" value="Chromosome II"/>
</dbReference>
<dbReference type="GO" id="GO:0005783">
    <property type="term" value="C:endoplasmic reticulum"/>
    <property type="evidence" value="ECO:0000314"/>
    <property type="project" value="PomBase"/>
</dbReference>
<dbReference type="GO" id="GO:0005794">
    <property type="term" value="C:Golgi apparatus"/>
    <property type="evidence" value="ECO:0007005"/>
    <property type="project" value="PomBase"/>
</dbReference>
<dbReference type="GO" id="GO:0016020">
    <property type="term" value="C:membrane"/>
    <property type="evidence" value="ECO:0007669"/>
    <property type="project" value="UniProtKB-SubCell"/>
</dbReference>
<dbReference type="GO" id="GO:0003756">
    <property type="term" value="F:protein disulfide isomerase activity"/>
    <property type="evidence" value="ECO:0000315"/>
    <property type="project" value="PomBase"/>
</dbReference>
<dbReference type="GO" id="GO:0034975">
    <property type="term" value="P:protein folding in endoplasmic reticulum"/>
    <property type="evidence" value="ECO:0000304"/>
    <property type="project" value="PomBase"/>
</dbReference>
<dbReference type="CDD" id="cd02961">
    <property type="entry name" value="PDI_a_family"/>
    <property type="match status" value="2"/>
</dbReference>
<dbReference type="Gene3D" id="3.40.30.10">
    <property type="entry name" value="Glutaredoxin"/>
    <property type="match status" value="2"/>
</dbReference>
<dbReference type="InterPro" id="IPR052250">
    <property type="entry name" value="PDI_TMX3"/>
</dbReference>
<dbReference type="InterPro" id="IPR036249">
    <property type="entry name" value="Thioredoxin-like_sf"/>
</dbReference>
<dbReference type="InterPro" id="IPR013766">
    <property type="entry name" value="Thioredoxin_domain"/>
</dbReference>
<dbReference type="PANTHER" id="PTHR46426">
    <property type="entry name" value="PROTEIN DISULFIDE-ISOMERASE TMX3"/>
    <property type="match status" value="1"/>
</dbReference>
<dbReference type="PANTHER" id="PTHR46426:SF1">
    <property type="entry name" value="PROTEIN DISULFIDE-ISOMERASE TMX3"/>
    <property type="match status" value="1"/>
</dbReference>
<dbReference type="Pfam" id="PF00085">
    <property type="entry name" value="Thioredoxin"/>
    <property type="match status" value="2"/>
</dbReference>
<dbReference type="Pfam" id="PF13848">
    <property type="entry name" value="Thioredoxin_6"/>
    <property type="match status" value="1"/>
</dbReference>
<dbReference type="SUPFAM" id="SSF52833">
    <property type="entry name" value="Thioredoxin-like"/>
    <property type="match status" value="3"/>
</dbReference>
<dbReference type="PROSITE" id="PS51352">
    <property type="entry name" value="THIOREDOXIN_2"/>
    <property type="match status" value="1"/>
</dbReference>
<organism>
    <name type="scientific">Schizosaccharomyces pombe (strain 972 / ATCC 24843)</name>
    <name type="common">Fission yeast</name>
    <dbReference type="NCBI Taxonomy" id="284812"/>
    <lineage>
        <taxon>Eukaryota</taxon>
        <taxon>Fungi</taxon>
        <taxon>Dikarya</taxon>
        <taxon>Ascomycota</taxon>
        <taxon>Taphrinomycotina</taxon>
        <taxon>Schizosaccharomycetes</taxon>
        <taxon>Schizosaccharomycetales</taxon>
        <taxon>Schizosaccharomycetaceae</taxon>
        <taxon>Schizosaccharomyces</taxon>
    </lineage>
</organism>
<keyword id="KW-0472">Membrane</keyword>
<keyword id="KW-0597">Phosphoprotein</keyword>
<keyword id="KW-1185">Reference proteome</keyword>
<keyword id="KW-0812">Transmembrane</keyword>
<keyword id="KW-1133">Transmembrane helix</keyword>